<sequence length="250" mass="26714">MRTPLVVGNWKMNGSRAANRALLESMRKEMEAGVTAEVAVCPPFVYLADMESLLQGSVINWGAQNLSHHEVGAYTGEIAPSMLADLGCRFVIVGHSERRTLYGETDSLVAEKAIVAQKVNIIPIICVGETLQEREQNITEQVVKRQLNAVLELAGVNALEKAVIAYEPIWAIGTGRTATPEQAQEVHALIRSHVAIQNSGIAEELLILYGGSVKGNNAAELLAMPDIDGGLIGGASLDAKEFLTICQAAG</sequence>
<dbReference type="EC" id="5.3.1.1" evidence="1"/>
<dbReference type="EMBL" id="CP000127">
    <property type="protein sequence ID" value="ABA59019.1"/>
    <property type="molecule type" value="Genomic_DNA"/>
</dbReference>
<dbReference type="RefSeq" id="WP_011331002.1">
    <property type="nucleotide sequence ID" value="NC_007484.1"/>
</dbReference>
<dbReference type="SMR" id="Q3J827"/>
<dbReference type="FunCoup" id="Q3J827">
    <property type="interactions" value="556"/>
</dbReference>
<dbReference type="STRING" id="323261.Noc_2566"/>
<dbReference type="KEGG" id="noc:Noc_2566"/>
<dbReference type="eggNOG" id="COG0149">
    <property type="taxonomic scope" value="Bacteria"/>
</dbReference>
<dbReference type="HOGENOM" id="CLU_024251_2_1_6"/>
<dbReference type="InParanoid" id="Q3J827"/>
<dbReference type="UniPathway" id="UPA00109">
    <property type="reaction ID" value="UER00189"/>
</dbReference>
<dbReference type="UniPathway" id="UPA00138"/>
<dbReference type="Proteomes" id="UP000006838">
    <property type="component" value="Chromosome"/>
</dbReference>
<dbReference type="GO" id="GO:0005829">
    <property type="term" value="C:cytosol"/>
    <property type="evidence" value="ECO:0007669"/>
    <property type="project" value="TreeGrafter"/>
</dbReference>
<dbReference type="GO" id="GO:0004807">
    <property type="term" value="F:triose-phosphate isomerase activity"/>
    <property type="evidence" value="ECO:0007669"/>
    <property type="project" value="UniProtKB-UniRule"/>
</dbReference>
<dbReference type="GO" id="GO:0006094">
    <property type="term" value="P:gluconeogenesis"/>
    <property type="evidence" value="ECO:0007669"/>
    <property type="project" value="UniProtKB-UniRule"/>
</dbReference>
<dbReference type="GO" id="GO:0046166">
    <property type="term" value="P:glyceraldehyde-3-phosphate biosynthetic process"/>
    <property type="evidence" value="ECO:0007669"/>
    <property type="project" value="TreeGrafter"/>
</dbReference>
<dbReference type="GO" id="GO:0019563">
    <property type="term" value="P:glycerol catabolic process"/>
    <property type="evidence" value="ECO:0007669"/>
    <property type="project" value="TreeGrafter"/>
</dbReference>
<dbReference type="GO" id="GO:0006096">
    <property type="term" value="P:glycolytic process"/>
    <property type="evidence" value="ECO:0007669"/>
    <property type="project" value="UniProtKB-UniRule"/>
</dbReference>
<dbReference type="CDD" id="cd00311">
    <property type="entry name" value="TIM"/>
    <property type="match status" value="1"/>
</dbReference>
<dbReference type="FunFam" id="3.20.20.70:FF:000020">
    <property type="entry name" value="Triosephosphate isomerase"/>
    <property type="match status" value="1"/>
</dbReference>
<dbReference type="Gene3D" id="3.20.20.70">
    <property type="entry name" value="Aldolase class I"/>
    <property type="match status" value="1"/>
</dbReference>
<dbReference type="HAMAP" id="MF_00147_B">
    <property type="entry name" value="TIM_B"/>
    <property type="match status" value="1"/>
</dbReference>
<dbReference type="InterPro" id="IPR013785">
    <property type="entry name" value="Aldolase_TIM"/>
</dbReference>
<dbReference type="InterPro" id="IPR035990">
    <property type="entry name" value="TIM_sf"/>
</dbReference>
<dbReference type="InterPro" id="IPR022896">
    <property type="entry name" value="TrioseP_Isoase_bac/euk"/>
</dbReference>
<dbReference type="InterPro" id="IPR000652">
    <property type="entry name" value="Triosephosphate_isomerase"/>
</dbReference>
<dbReference type="InterPro" id="IPR020861">
    <property type="entry name" value="Triosephosphate_isomerase_AS"/>
</dbReference>
<dbReference type="NCBIfam" id="TIGR00419">
    <property type="entry name" value="tim"/>
    <property type="match status" value="1"/>
</dbReference>
<dbReference type="PANTHER" id="PTHR21139">
    <property type="entry name" value="TRIOSEPHOSPHATE ISOMERASE"/>
    <property type="match status" value="1"/>
</dbReference>
<dbReference type="PANTHER" id="PTHR21139:SF42">
    <property type="entry name" value="TRIOSEPHOSPHATE ISOMERASE"/>
    <property type="match status" value="1"/>
</dbReference>
<dbReference type="Pfam" id="PF00121">
    <property type="entry name" value="TIM"/>
    <property type="match status" value="1"/>
</dbReference>
<dbReference type="SUPFAM" id="SSF51351">
    <property type="entry name" value="Triosephosphate isomerase (TIM)"/>
    <property type="match status" value="1"/>
</dbReference>
<dbReference type="PROSITE" id="PS00171">
    <property type="entry name" value="TIM_1"/>
    <property type="match status" value="1"/>
</dbReference>
<dbReference type="PROSITE" id="PS51440">
    <property type="entry name" value="TIM_2"/>
    <property type="match status" value="1"/>
</dbReference>
<keyword id="KW-0963">Cytoplasm</keyword>
<keyword id="KW-0312">Gluconeogenesis</keyword>
<keyword id="KW-0324">Glycolysis</keyword>
<keyword id="KW-0413">Isomerase</keyword>
<keyword id="KW-1185">Reference proteome</keyword>
<reference key="1">
    <citation type="journal article" date="2006" name="Appl. Environ. Microbiol.">
        <title>Complete genome sequence of the marine, chemolithoautotrophic, ammonia-oxidizing bacterium Nitrosococcus oceani ATCC 19707.</title>
        <authorList>
            <person name="Klotz M.G."/>
            <person name="Arp D.J."/>
            <person name="Chain P.S.G."/>
            <person name="El-Sheikh A.F."/>
            <person name="Hauser L.J."/>
            <person name="Hommes N.G."/>
            <person name="Larimer F.W."/>
            <person name="Malfatti S.A."/>
            <person name="Norton J.M."/>
            <person name="Poret-Peterson A.T."/>
            <person name="Vergez L.M."/>
            <person name="Ward B.B."/>
        </authorList>
    </citation>
    <scope>NUCLEOTIDE SEQUENCE [LARGE SCALE GENOMIC DNA]</scope>
    <source>
        <strain>ATCC 19707 / BCRC 17464 / JCM 30415 / NCIMB 11848 / C-107</strain>
    </source>
</reference>
<accession>Q3J827</accession>
<protein>
    <recommendedName>
        <fullName evidence="1">Triosephosphate isomerase</fullName>
        <shortName evidence="1">TIM</shortName>
        <shortName evidence="1">TPI</shortName>
        <ecNumber evidence="1">5.3.1.1</ecNumber>
    </recommendedName>
    <alternativeName>
        <fullName evidence="1">Triose-phosphate isomerase</fullName>
    </alternativeName>
</protein>
<gene>
    <name evidence="1" type="primary">tpiA</name>
    <name type="ordered locus">Noc_2566</name>
</gene>
<evidence type="ECO:0000255" key="1">
    <source>
        <dbReference type="HAMAP-Rule" id="MF_00147"/>
    </source>
</evidence>
<name>TPIS_NITOC</name>
<proteinExistence type="inferred from homology"/>
<organism>
    <name type="scientific">Nitrosococcus oceani (strain ATCC 19707 / BCRC 17464 / JCM 30415 / NCIMB 11848 / C-107)</name>
    <dbReference type="NCBI Taxonomy" id="323261"/>
    <lineage>
        <taxon>Bacteria</taxon>
        <taxon>Pseudomonadati</taxon>
        <taxon>Pseudomonadota</taxon>
        <taxon>Gammaproteobacteria</taxon>
        <taxon>Chromatiales</taxon>
        <taxon>Chromatiaceae</taxon>
        <taxon>Nitrosococcus</taxon>
    </lineage>
</organism>
<feature type="chain" id="PRO_0000307516" description="Triosephosphate isomerase">
    <location>
        <begin position="1"/>
        <end position="250"/>
    </location>
</feature>
<feature type="active site" description="Electrophile" evidence="1">
    <location>
        <position position="95"/>
    </location>
</feature>
<feature type="active site" description="Proton acceptor" evidence="1">
    <location>
        <position position="167"/>
    </location>
</feature>
<feature type="binding site" evidence="1">
    <location>
        <begin position="9"/>
        <end position="11"/>
    </location>
    <ligand>
        <name>substrate</name>
    </ligand>
</feature>
<feature type="binding site" evidence="1">
    <location>
        <position position="173"/>
    </location>
    <ligand>
        <name>substrate</name>
    </ligand>
</feature>
<feature type="binding site" evidence="1">
    <location>
        <position position="212"/>
    </location>
    <ligand>
        <name>substrate</name>
    </ligand>
</feature>
<feature type="binding site" evidence="1">
    <location>
        <begin position="233"/>
        <end position="234"/>
    </location>
    <ligand>
        <name>substrate</name>
    </ligand>
</feature>
<comment type="function">
    <text evidence="1">Involved in the gluconeogenesis. Catalyzes stereospecifically the conversion of dihydroxyacetone phosphate (DHAP) to D-glyceraldehyde-3-phosphate (G3P).</text>
</comment>
<comment type="catalytic activity">
    <reaction evidence="1">
        <text>D-glyceraldehyde 3-phosphate = dihydroxyacetone phosphate</text>
        <dbReference type="Rhea" id="RHEA:18585"/>
        <dbReference type="ChEBI" id="CHEBI:57642"/>
        <dbReference type="ChEBI" id="CHEBI:59776"/>
        <dbReference type="EC" id="5.3.1.1"/>
    </reaction>
</comment>
<comment type="pathway">
    <text evidence="1">Carbohydrate biosynthesis; gluconeogenesis.</text>
</comment>
<comment type="pathway">
    <text evidence="1">Carbohydrate degradation; glycolysis; D-glyceraldehyde 3-phosphate from glycerone phosphate: step 1/1.</text>
</comment>
<comment type="subunit">
    <text evidence="1">Homodimer.</text>
</comment>
<comment type="subcellular location">
    <subcellularLocation>
        <location evidence="1">Cytoplasm</location>
    </subcellularLocation>
</comment>
<comment type="similarity">
    <text evidence="1">Belongs to the triosephosphate isomerase family.</text>
</comment>